<accession>Q4A8P0</accession>
<gene>
    <name evidence="1" type="primary">rpmI</name>
    <name type="ordered locus">MHP7448_0124</name>
</gene>
<feature type="chain" id="PRO_0000258706" description="Large ribosomal subunit protein bL35">
    <location>
        <begin position="1"/>
        <end position="64"/>
    </location>
</feature>
<feature type="region of interest" description="Disordered" evidence="2">
    <location>
        <begin position="22"/>
        <end position="64"/>
    </location>
</feature>
<feature type="compositionally biased region" description="Basic residues" evidence="2">
    <location>
        <begin position="22"/>
        <end position="31"/>
    </location>
</feature>
<protein>
    <recommendedName>
        <fullName evidence="1">Large ribosomal subunit protein bL35</fullName>
    </recommendedName>
    <alternativeName>
        <fullName evidence="3">50S ribosomal protein L35</fullName>
    </alternativeName>
</protein>
<sequence length="64" mass="7413">MSKIKFKTKSALKKRIKVTGTGKVKHGHAYRSHLAQSKTTKQKRQSRKSTLMNNSDFKRLKKLI</sequence>
<organism>
    <name type="scientific">Mesomycoplasma hyopneumoniae (strain 7448)</name>
    <name type="common">Mycoplasma hyopneumoniae</name>
    <dbReference type="NCBI Taxonomy" id="262722"/>
    <lineage>
        <taxon>Bacteria</taxon>
        <taxon>Bacillati</taxon>
        <taxon>Mycoplasmatota</taxon>
        <taxon>Mycoplasmoidales</taxon>
        <taxon>Metamycoplasmataceae</taxon>
        <taxon>Mesomycoplasma</taxon>
    </lineage>
</organism>
<comment type="similarity">
    <text evidence="1">Belongs to the bacterial ribosomal protein bL35 family.</text>
</comment>
<reference key="1">
    <citation type="journal article" date="2005" name="J. Bacteriol.">
        <title>Swine and poultry pathogens: the complete genome sequences of two strains of Mycoplasma hyopneumoniae and a strain of Mycoplasma synoviae.</title>
        <authorList>
            <person name="Vasconcelos A.T.R."/>
            <person name="Ferreira H.B."/>
            <person name="Bizarro C.V."/>
            <person name="Bonatto S.L."/>
            <person name="Carvalho M.O."/>
            <person name="Pinto P.M."/>
            <person name="Almeida D.F."/>
            <person name="Almeida L.G.P."/>
            <person name="Almeida R."/>
            <person name="Alves-Junior L."/>
            <person name="Assuncao E.N."/>
            <person name="Azevedo V.A.C."/>
            <person name="Bogo M.R."/>
            <person name="Brigido M.M."/>
            <person name="Brocchi M."/>
            <person name="Burity H.A."/>
            <person name="Camargo A.A."/>
            <person name="Camargo S.S."/>
            <person name="Carepo M.S."/>
            <person name="Carraro D.M."/>
            <person name="de Mattos Cascardo J.C."/>
            <person name="Castro L.A."/>
            <person name="Cavalcanti G."/>
            <person name="Chemale G."/>
            <person name="Collevatti R.G."/>
            <person name="Cunha C.W."/>
            <person name="Dallagiovanna B."/>
            <person name="Dambros B.P."/>
            <person name="Dellagostin O.A."/>
            <person name="Falcao C."/>
            <person name="Fantinatti-Garboggini F."/>
            <person name="Felipe M.S.S."/>
            <person name="Fiorentin L."/>
            <person name="Franco G.R."/>
            <person name="Freitas N.S.A."/>
            <person name="Frias D."/>
            <person name="Grangeiro T.B."/>
            <person name="Grisard E.C."/>
            <person name="Guimaraes C.T."/>
            <person name="Hungria M."/>
            <person name="Jardim S.N."/>
            <person name="Krieger M.A."/>
            <person name="Laurino J.P."/>
            <person name="Lima L.F.A."/>
            <person name="Lopes M.I."/>
            <person name="Loreto E.L.S."/>
            <person name="Madeira H.M.F."/>
            <person name="Manfio G.P."/>
            <person name="Maranhao A.Q."/>
            <person name="Martinkovics C.T."/>
            <person name="Medeiros S.R.B."/>
            <person name="Moreira M.A.M."/>
            <person name="Neiva M."/>
            <person name="Ramalho-Neto C.E."/>
            <person name="Nicolas M.F."/>
            <person name="Oliveira S.C."/>
            <person name="Paixao R.F.C."/>
            <person name="Pedrosa F.O."/>
            <person name="Pena S.D.J."/>
            <person name="Pereira M."/>
            <person name="Pereira-Ferrari L."/>
            <person name="Piffer I."/>
            <person name="Pinto L.S."/>
            <person name="Potrich D.P."/>
            <person name="Salim A.C.M."/>
            <person name="Santos F.R."/>
            <person name="Schmitt R."/>
            <person name="Schneider M.P.C."/>
            <person name="Schrank A."/>
            <person name="Schrank I.S."/>
            <person name="Schuck A.F."/>
            <person name="Seuanez H.N."/>
            <person name="Silva D.W."/>
            <person name="Silva R."/>
            <person name="Silva S.C."/>
            <person name="Soares C.M.A."/>
            <person name="Souza K.R.L."/>
            <person name="Souza R.C."/>
            <person name="Staats C.C."/>
            <person name="Steffens M.B.R."/>
            <person name="Teixeira S.M.R."/>
            <person name="Urmenyi T.P."/>
            <person name="Vainstein M.H."/>
            <person name="Zuccherato L.W."/>
            <person name="Simpson A.J.G."/>
            <person name="Zaha A."/>
        </authorList>
    </citation>
    <scope>NUCLEOTIDE SEQUENCE [LARGE SCALE GENOMIC DNA]</scope>
    <source>
        <strain>7448</strain>
    </source>
</reference>
<name>RL35_MESH7</name>
<keyword id="KW-0687">Ribonucleoprotein</keyword>
<keyword id="KW-0689">Ribosomal protein</keyword>
<proteinExistence type="inferred from homology"/>
<dbReference type="EMBL" id="AE017244">
    <property type="protein sequence ID" value="AAZ53499.2"/>
    <property type="molecule type" value="Genomic_DNA"/>
</dbReference>
<dbReference type="RefSeq" id="WP_011206094.1">
    <property type="nucleotide sequence ID" value="NC_007332.1"/>
</dbReference>
<dbReference type="SMR" id="Q4A8P0"/>
<dbReference type="GeneID" id="41334422"/>
<dbReference type="KEGG" id="mhp:MHP7448_0124"/>
<dbReference type="HOGENOM" id="CLU_169643_3_1_14"/>
<dbReference type="Proteomes" id="UP000000553">
    <property type="component" value="Chromosome"/>
</dbReference>
<dbReference type="GO" id="GO:0022625">
    <property type="term" value="C:cytosolic large ribosomal subunit"/>
    <property type="evidence" value="ECO:0007669"/>
    <property type="project" value="TreeGrafter"/>
</dbReference>
<dbReference type="GO" id="GO:0003735">
    <property type="term" value="F:structural constituent of ribosome"/>
    <property type="evidence" value="ECO:0007669"/>
    <property type="project" value="InterPro"/>
</dbReference>
<dbReference type="GO" id="GO:0006412">
    <property type="term" value="P:translation"/>
    <property type="evidence" value="ECO:0007669"/>
    <property type="project" value="UniProtKB-UniRule"/>
</dbReference>
<dbReference type="FunFam" id="4.10.410.60:FF:000001">
    <property type="entry name" value="50S ribosomal protein L35"/>
    <property type="match status" value="1"/>
</dbReference>
<dbReference type="Gene3D" id="4.10.410.60">
    <property type="match status" value="1"/>
</dbReference>
<dbReference type="HAMAP" id="MF_00514">
    <property type="entry name" value="Ribosomal_bL35"/>
    <property type="match status" value="1"/>
</dbReference>
<dbReference type="InterPro" id="IPR001706">
    <property type="entry name" value="Ribosomal_bL35"/>
</dbReference>
<dbReference type="InterPro" id="IPR021137">
    <property type="entry name" value="Ribosomal_bL35-like"/>
</dbReference>
<dbReference type="InterPro" id="IPR018265">
    <property type="entry name" value="Ribosomal_bL35_CS"/>
</dbReference>
<dbReference type="InterPro" id="IPR037229">
    <property type="entry name" value="Ribosomal_bL35_sf"/>
</dbReference>
<dbReference type="NCBIfam" id="TIGR00001">
    <property type="entry name" value="rpmI_bact"/>
    <property type="match status" value="1"/>
</dbReference>
<dbReference type="PANTHER" id="PTHR33343">
    <property type="entry name" value="54S RIBOSOMAL PROTEIN BL35M"/>
    <property type="match status" value="1"/>
</dbReference>
<dbReference type="PANTHER" id="PTHR33343:SF1">
    <property type="entry name" value="LARGE RIBOSOMAL SUBUNIT PROTEIN BL35M"/>
    <property type="match status" value="1"/>
</dbReference>
<dbReference type="Pfam" id="PF01632">
    <property type="entry name" value="Ribosomal_L35p"/>
    <property type="match status" value="1"/>
</dbReference>
<dbReference type="PRINTS" id="PR00064">
    <property type="entry name" value="RIBOSOMALL35"/>
</dbReference>
<dbReference type="SUPFAM" id="SSF143034">
    <property type="entry name" value="L35p-like"/>
    <property type="match status" value="1"/>
</dbReference>
<dbReference type="PROSITE" id="PS00936">
    <property type="entry name" value="RIBOSOMAL_L35"/>
    <property type="match status" value="1"/>
</dbReference>
<evidence type="ECO:0000255" key="1">
    <source>
        <dbReference type="HAMAP-Rule" id="MF_00514"/>
    </source>
</evidence>
<evidence type="ECO:0000256" key="2">
    <source>
        <dbReference type="SAM" id="MobiDB-lite"/>
    </source>
</evidence>
<evidence type="ECO:0000305" key="3"/>